<reference key="1">
    <citation type="journal article" date="2007" name="Proc. Natl. Acad. Sci. U.S.A.">
        <title>Genome plasticity of BCG and impact on vaccine efficacy.</title>
        <authorList>
            <person name="Brosch R."/>
            <person name="Gordon S.V."/>
            <person name="Garnier T."/>
            <person name="Eiglmeier K."/>
            <person name="Frigui W."/>
            <person name="Valenti P."/>
            <person name="Dos Santos S."/>
            <person name="Duthoy S."/>
            <person name="Lacroix C."/>
            <person name="Garcia-Pelayo C."/>
            <person name="Inwald J.K."/>
            <person name="Golby P."/>
            <person name="Garcia J.N."/>
            <person name="Hewinson R.G."/>
            <person name="Behr M.A."/>
            <person name="Quail M.A."/>
            <person name="Churcher C."/>
            <person name="Barrell B.G."/>
            <person name="Parkhill J."/>
            <person name="Cole S.T."/>
        </authorList>
    </citation>
    <scope>NUCLEOTIDE SEQUENCE [LARGE SCALE GENOMIC DNA]</scope>
    <source>
        <strain>BCG / Pasteur 1173P2</strain>
    </source>
</reference>
<comment type="function">
    <text evidence="1">Catalyzes the reversible oxidation of malate to oxaloacetate.</text>
</comment>
<comment type="catalytic activity">
    <reaction evidence="1">
        <text>(S)-malate + NAD(+) = oxaloacetate + NADH + H(+)</text>
        <dbReference type="Rhea" id="RHEA:21432"/>
        <dbReference type="ChEBI" id="CHEBI:15378"/>
        <dbReference type="ChEBI" id="CHEBI:15589"/>
        <dbReference type="ChEBI" id="CHEBI:16452"/>
        <dbReference type="ChEBI" id="CHEBI:57540"/>
        <dbReference type="ChEBI" id="CHEBI:57945"/>
        <dbReference type="EC" id="1.1.1.37"/>
    </reaction>
</comment>
<comment type="similarity">
    <text evidence="1">Belongs to the LDH/MDH superfamily. MDH type 2 family.</text>
</comment>
<feature type="chain" id="PRO_0000294393" description="Malate dehydrogenase">
    <location>
        <begin position="1"/>
        <end position="329"/>
    </location>
</feature>
<feature type="active site" description="Proton acceptor" evidence="1">
    <location>
        <position position="188"/>
    </location>
</feature>
<feature type="binding site" evidence="1">
    <location>
        <begin position="12"/>
        <end position="18"/>
    </location>
    <ligand>
        <name>NAD(+)</name>
        <dbReference type="ChEBI" id="CHEBI:57540"/>
    </ligand>
</feature>
<feature type="binding site" evidence="1">
    <location>
        <position position="93"/>
    </location>
    <ligand>
        <name>substrate</name>
    </ligand>
</feature>
<feature type="binding site" evidence="1">
    <location>
        <position position="99"/>
    </location>
    <ligand>
        <name>substrate</name>
    </ligand>
</feature>
<feature type="binding site" evidence="1">
    <location>
        <position position="106"/>
    </location>
    <ligand>
        <name>NAD(+)</name>
        <dbReference type="ChEBI" id="CHEBI:57540"/>
    </ligand>
</feature>
<feature type="binding site" evidence="1">
    <location>
        <position position="113"/>
    </location>
    <ligand>
        <name>NAD(+)</name>
        <dbReference type="ChEBI" id="CHEBI:57540"/>
    </ligand>
</feature>
<feature type="binding site" evidence="1">
    <location>
        <begin position="130"/>
        <end position="132"/>
    </location>
    <ligand>
        <name>NAD(+)</name>
        <dbReference type="ChEBI" id="CHEBI:57540"/>
    </ligand>
</feature>
<feature type="binding site" evidence="1">
    <location>
        <position position="132"/>
    </location>
    <ligand>
        <name>substrate</name>
    </ligand>
</feature>
<feature type="binding site" evidence="1">
    <location>
        <position position="163"/>
    </location>
    <ligand>
        <name>substrate</name>
    </ligand>
</feature>
<organism>
    <name type="scientific">Mycobacterium bovis (strain BCG / Pasteur 1173P2)</name>
    <dbReference type="NCBI Taxonomy" id="410289"/>
    <lineage>
        <taxon>Bacteria</taxon>
        <taxon>Bacillati</taxon>
        <taxon>Actinomycetota</taxon>
        <taxon>Actinomycetes</taxon>
        <taxon>Mycobacteriales</taxon>
        <taxon>Mycobacteriaceae</taxon>
        <taxon>Mycobacterium</taxon>
        <taxon>Mycobacterium tuberculosis complex</taxon>
    </lineage>
</organism>
<proteinExistence type="inferred from homology"/>
<protein>
    <recommendedName>
        <fullName evidence="1">Malate dehydrogenase</fullName>
        <ecNumber evidence="1">1.1.1.37</ecNumber>
    </recommendedName>
</protein>
<name>MDH_MYCBP</name>
<gene>
    <name evidence="1" type="primary">mdh</name>
    <name type="ordered locus">BCG_1300</name>
</gene>
<evidence type="ECO:0000255" key="1">
    <source>
        <dbReference type="HAMAP-Rule" id="MF_01517"/>
    </source>
</evidence>
<accession>A1KI28</accession>
<sequence>MSASPLKVAVTGAAGQIGYSLLFRLASGSLLGPDRPIELRLLEIEPALQALEGVVMELDDCAFPLLSGVEIGSDPQKIFDGVSLALLVGARPRGAGMERSDLLEANGAIFTAQGKALNAVAADDVRVGVTGNPANTNALIAMTNAPDIPRERFSALTRLDHNRAISQLAAKTGAAVTDIKKMTIWGNHSATQYPDLFHAEVAGKNAAEVVNDQAWIEDEFIPTVAKRGAAIIDARGASSAASAASATIDAARDWLLGTPADDWVSMAVVSDGSYGVPEGLISSFPVTTKGGNWTIVSGLEIDEFSRGRIDKSTAELADERSAVTELGLI</sequence>
<keyword id="KW-0520">NAD</keyword>
<keyword id="KW-0560">Oxidoreductase</keyword>
<keyword id="KW-0816">Tricarboxylic acid cycle</keyword>
<dbReference type="EC" id="1.1.1.37" evidence="1"/>
<dbReference type="EMBL" id="AM408590">
    <property type="protein sequence ID" value="CAL71287.1"/>
    <property type="molecule type" value="Genomic_DNA"/>
</dbReference>
<dbReference type="RefSeq" id="WP_003406301.1">
    <property type="nucleotide sequence ID" value="NC_008769.1"/>
</dbReference>
<dbReference type="SMR" id="A1KI28"/>
<dbReference type="KEGG" id="mbb:BCG_1300"/>
<dbReference type="HOGENOM" id="CLU_040727_2_0_11"/>
<dbReference type="SABIO-RK" id="A1KI28"/>
<dbReference type="Proteomes" id="UP000001472">
    <property type="component" value="Chromosome"/>
</dbReference>
<dbReference type="GO" id="GO:0030060">
    <property type="term" value="F:L-malate dehydrogenase (NAD+) activity"/>
    <property type="evidence" value="ECO:0007669"/>
    <property type="project" value="UniProtKB-UniRule"/>
</dbReference>
<dbReference type="GO" id="GO:0006108">
    <property type="term" value="P:malate metabolic process"/>
    <property type="evidence" value="ECO:0007669"/>
    <property type="project" value="InterPro"/>
</dbReference>
<dbReference type="GO" id="GO:0006099">
    <property type="term" value="P:tricarboxylic acid cycle"/>
    <property type="evidence" value="ECO:0007669"/>
    <property type="project" value="UniProtKB-UniRule"/>
</dbReference>
<dbReference type="CDD" id="cd01338">
    <property type="entry name" value="MDH_chloroplast-like"/>
    <property type="match status" value="1"/>
</dbReference>
<dbReference type="FunFam" id="3.40.50.720:FF:000010">
    <property type="entry name" value="Malate dehydrogenase"/>
    <property type="match status" value="1"/>
</dbReference>
<dbReference type="FunFam" id="3.90.110.10:FF:000002">
    <property type="entry name" value="Malate dehydrogenase"/>
    <property type="match status" value="1"/>
</dbReference>
<dbReference type="Gene3D" id="3.90.110.10">
    <property type="entry name" value="Lactate dehydrogenase/glycoside hydrolase, family 4, C-terminal"/>
    <property type="match status" value="1"/>
</dbReference>
<dbReference type="Gene3D" id="3.40.50.720">
    <property type="entry name" value="NAD(P)-binding Rossmann-like Domain"/>
    <property type="match status" value="1"/>
</dbReference>
<dbReference type="HAMAP" id="MF_01517">
    <property type="entry name" value="Malate_dehydrog_2"/>
    <property type="match status" value="1"/>
</dbReference>
<dbReference type="InterPro" id="IPR001557">
    <property type="entry name" value="L-lactate/malate_DH"/>
</dbReference>
<dbReference type="InterPro" id="IPR022383">
    <property type="entry name" value="Lactate/malate_DH_C"/>
</dbReference>
<dbReference type="InterPro" id="IPR001236">
    <property type="entry name" value="Lactate/malate_DH_N"/>
</dbReference>
<dbReference type="InterPro" id="IPR015955">
    <property type="entry name" value="Lactate_DH/Glyco_Ohase_4_C"/>
</dbReference>
<dbReference type="InterPro" id="IPR001252">
    <property type="entry name" value="Malate_DH_AS"/>
</dbReference>
<dbReference type="InterPro" id="IPR010945">
    <property type="entry name" value="Malate_DH_type2"/>
</dbReference>
<dbReference type="InterPro" id="IPR036291">
    <property type="entry name" value="NAD(P)-bd_dom_sf"/>
</dbReference>
<dbReference type="NCBIfam" id="TIGR01759">
    <property type="entry name" value="MalateDH-SF1"/>
    <property type="match status" value="1"/>
</dbReference>
<dbReference type="NCBIfam" id="NF003916">
    <property type="entry name" value="PRK05442.1"/>
    <property type="match status" value="1"/>
</dbReference>
<dbReference type="PANTHER" id="PTHR23382">
    <property type="entry name" value="MALATE DEHYDROGENASE"/>
    <property type="match status" value="1"/>
</dbReference>
<dbReference type="Pfam" id="PF02866">
    <property type="entry name" value="Ldh_1_C"/>
    <property type="match status" value="1"/>
</dbReference>
<dbReference type="Pfam" id="PF00056">
    <property type="entry name" value="Ldh_1_N"/>
    <property type="match status" value="1"/>
</dbReference>
<dbReference type="PIRSF" id="PIRSF000102">
    <property type="entry name" value="Lac_mal_DH"/>
    <property type="match status" value="1"/>
</dbReference>
<dbReference type="SUPFAM" id="SSF56327">
    <property type="entry name" value="LDH C-terminal domain-like"/>
    <property type="match status" value="1"/>
</dbReference>
<dbReference type="SUPFAM" id="SSF51735">
    <property type="entry name" value="NAD(P)-binding Rossmann-fold domains"/>
    <property type="match status" value="1"/>
</dbReference>
<dbReference type="PROSITE" id="PS00068">
    <property type="entry name" value="MDH"/>
    <property type="match status" value="1"/>
</dbReference>